<comment type="function">
    <text evidence="1">Involved in peptide bond synthesis. Stimulates efficient translation and peptide-bond synthesis on native or reconstituted 70S ribosomes in vitro. Probably functions indirectly by altering the affinity of the ribosome for aminoacyl-tRNA, thus increasing their reactivity as acceptors for peptidyl transferase.</text>
</comment>
<comment type="pathway">
    <text evidence="1">Protein biosynthesis; polypeptide chain elongation.</text>
</comment>
<comment type="subcellular location">
    <subcellularLocation>
        <location evidence="1">Cytoplasm</location>
    </subcellularLocation>
</comment>
<comment type="similarity">
    <text evidence="1">Belongs to the elongation factor P family.</text>
</comment>
<proteinExistence type="inferred from homology"/>
<accession>C1CZB4</accession>
<evidence type="ECO:0000255" key="1">
    <source>
        <dbReference type="HAMAP-Rule" id="MF_00141"/>
    </source>
</evidence>
<gene>
    <name evidence="1" type="primary">efp</name>
    <name type="ordered locus">Deide_03300</name>
</gene>
<organism>
    <name type="scientific">Deinococcus deserti (strain DSM 17065 / CIP 109153 / LMG 22923 / VCD115)</name>
    <dbReference type="NCBI Taxonomy" id="546414"/>
    <lineage>
        <taxon>Bacteria</taxon>
        <taxon>Thermotogati</taxon>
        <taxon>Deinococcota</taxon>
        <taxon>Deinococci</taxon>
        <taxon>Deinococcales</taxon>
        <taxon>Deinococcaceae</taxon>
        <taxon>Deinococcus</taxon>
    </lineage>
</organism>
<protein>
    <recommendedName>
        <fullName evidence="1">Elongation factor P</fullName>
        <shortName evidence="1">EF-P</shortName>
    </recommendedName>
</protein>
<dbReference type="EMBL" id="CP001114">
    <property type="protein sequence ID" value="ACO45152.1"/>
    <property type="molecule type" value="Genomic_DNA"/>
</dbReference>
<dbReference type="RefSeq" id="WP_012692275.1">
    <property type="nucleotide sequence ID" value="NC_012526.1"/>
</dbReference>
<dbReference type="SMR" id="C1CZB4"/>
<dbReference type="STRING" id="546414.Deide_03300"/>
<dbReference type="PaxDb" id="546414-Deide_03300"/>
<dbReference type="KEGG" id="ddr:Deide_03300"/>
<dbReference type="eggNOG" id="COG0231">
    <property type="taxonomic scope" value="Bacteria"/>
</dbReference>
<dbReference type="HOGENOM" id="CLU_074944_0_1_0"/>
<dbReference type="OrthoDB" id="9801844at2"/>
<dbReference type="UniPathway" id="UPA00345"/>
<dbReference type="Proteomes" id="UP000002208">
    <property type="component" value="Chromosome"/>
</dbReference>
<dbReference type="GO" id="GO:0005737">
    <property type="term" value="C:cytoplasm"/>
    <property type="evidence" value="ECO:0007669"/>
    <property type="project" value="UniProtKB-SubCell"/>
</dbReference>
<dbReference type="GO" id="GO:0003746">
    <property type="term" value="F:translation elongation factor activity"/>
    <property type="evidence" value="ECO:0007669"/>
    <property type="project" value="UniProtKB-UniRule"/>
</dbReference>
<dbReference type="GO" id="GO:0043043">
    <property type="term" value="P:peptide biosynthetic process"/>
    <property type="evidence" value="ECO:0007669"/>
    <property type="project" value="InterPro"/>
</dbReference>
<dbReference type="CDD" id="cd04470">
    <property type="entry name" value="S1_EF-P_repeat_1"/>
    <property type="match status" value="1"/>
</dbReference>
<dbReference type="CDD" id="cd05794">
    <property type="entry name" value="S1_EF-P_repeat_2"/>
    <property type="match status" value="1"/>
</dbReference>
<dbReference type="FunFam" id="2.30.30.30:FF:000003">
    <property type="entry name" value="Elongation factor P"/>
    <property type="match status" value="1"/>
</dbReference>
<dbReference type="FunFam" id="2.40.50.140:FF:000004">
    <property type="entry name" value="Elongation factor P"/>
    <property type="match status" value="1"/>
</dbReference>
<dbReference type="FunFam" id="2.40.50.140:FF:000009">
    <property type="entry name" value="Elongation factor P"/>
    <property type="match status" value="1"/>
</dbReference>
<dbReference type="Gene3D" id="2.30.30.30">
    <property type="match status" value="1"/>
</dbReference>
<dbReference type="Gene3D" id="2.40.50.140">
    <property type="entry name" value="Nucleic acid-binding proteins"/>
    <property type="match status" value="2"/>
</dbReference>
<dbReference type="HAMAP" id="MF_00141">
    <property type="entry name" value="EF_P"/>
    <property type="match status" value="1"/>
</dbReference>
<dbReference type="InterPro" id="IPR015365">
    <property type="entry name" value="Elong-fact-P_C"/>
</dbReference>
<dbReference type="InterPro" id="IPR012340">
    <property type="entry name" value="NA-bd_OB-fold"/>
</dbReference>
<dbReference type="InterPro" id="IPR014722">
    <property type="entry name" value="Rib_uL2_dom2"/>
</dbReference>
<dbReference type="InterPro" id="IPR020599">
    <property type="entry name" value="Transl_elong_fac_P/YeiP"/>
</dbReference>
<dbReference type="InterPro" id="IPR013185">
    <property type="entry name" value="Transl_elong_KOW-like"/>
</dbReference>
<dbReference type="InterPro" id="IPR001059">
    <property type="entry name" value="Transl_elong_P/YeiP_cen"/>
</dbReference>
<dbReference type="InterPro" id="IPR013852">
    <property type="entry name" value="Transl_elong_P/YeiP_CS"/>
</dbReference>
<dbReference type="InterPro" id="IPR011768">
    <property type="entry name" value="Transl_elongation_fac_P"/>
</dbReference>
<dbReference type="InterPro" id="IPR008991">
    <property type="entry name" value="Translation_prot_SH3-like_sf"/>
</dbReference>
<dbReference type="NCBIfam" id="TIGR00038">
    <property type="entry name" value="efp"/>
    <property type="match status" value="1"/>
</dbReference>
<dbReference type="NCBIfam" id="NF001810">
    <property type="entry name" value="PRK00529.1"/>
    <property type="match status" value="1"/>
</dbReference>
<dbReference type="PANTHER" id="PTHR30053">
    <property type="entry name" value="ELONGATION FACTOR P"/>
    <property type="match status" value="1"/>
</dbReference>
<dbReference type="PANTHER" id="PTHR30053:SF12">
    <property type="entry name" value="ELONGATION FACTOR P (EF-P) FAMILY PROTEIN"/>
    <property type="match status" value="1"/>
</dbReference>
<dbReference type="Pfam" id="PF01132">
    <property type="entry name" value="EFP"/>
    <property type="match status" value="1"/>
</dbReference>
<dbReference type="Pfam" id="PF08207">
    <property type="entry name" value="EFP_N"/>
    <property type="match status" value="1"/>
</dbReference>
<dbReference type="Pfam" id="PF09285">
    <property type="entry name" value="Elong-fact-P_C"/>
    <property type="match status" value="1"/>
</dbReference>
<dbReference type="PIRSF" id="PIRSF005901">
    <property type="entry name" value="EF-P"/>
    <property type="match status" value="1"/>
</dbReference>
<dbReference type="SMART" id="SM01185">
    <property type="entry name" value="EFP"/>
    <property type="match status" value="1"/>
</dbReference>
<dbReference type="SMART" id="SM00841">
    <property type="entry name" value="Elong-fact-P_C"/>
    <property type="match status" value="1"/>
</dbReference>
<dbReference type="SUPFAM" id="SSF50249">
    <property type="entry name" value="Nucleic acid-binding proteins"/>
    <property type="match status" value="2"/>
</dbReference>
<dbReference type="SUPFAM" id="SSF50104">
    <property type="entry name" value="Translation proteins SH3-like domain"/>
    <property type="match status" value="1"/>
</dbReference>
<dbReference type="PROSITE" id="PS01275">
    <property type="entry name" value="EFP"/>
    <property type="match status" value="1"/>
</dbReference>
<feature type="chain" id="PRO_1000203262" description="Elongation factor P">
    <location>
        <begin position="1"/>
        <end position="185"/>
    </location>
</feature>
<name>EFP_DEIDV</name>
<keyword id="KW-0963">Cytoplasm</keyword>
<keyword id="KW-0251">Elongation factor</keyword>
<keyword id="KW-0648">Protein biosynthesis</keyword>
<keyword id="KW-1185">Reference proteome</keyword>
<reference key="1">
    <citation type="journal article" date="2009" name="PLoS Genet.">
        <title>Alliance of proteomics and genomics to unravel the specificities of Sahara bacterium Deinococcus deserti.</title>
        <authorList>
            <person name="de Groot A."/>
            <person name="Dulermo R."/>
            <person name="Ortet P."/>
            <person name="Blanchard L."/>
            <person name="Guerin P."/>
            <person name="Fernandez B."/>
            <person name="Vacherie B."/>
            <person name="Dossat C."/>
            <person name="Jolivet E."/>
            <person name="Siguier P."/>
            <person name="Chandler M."/>
            <person name="Barakat M."/>
            <person name="Dedieu A."/>
            <person name="Barbe V."/>
            <person name="Heulin T."/>
            <person name="Sommer S."/>
            <person name="Achouak W."/>
            <person name="Armengaud J."/>
        </authorList>
    </citation>
    <scope>NUCLEOTIDE SEQUENCE [LARGE SCALE GENOMIC DNA]</scope>
    <source>
        <strain>DSM 17065 / CIP 109153 / LMG 22923 / VCD115</strain>
    </source>
</reference>
<sequence length="185" mass="20503">MISVTELRNGTKVEMDGGLWECLDYSHLKMGRGGAKVVTKFRNMETGSIVDRTFNSGEKLQDIYVEGKKMQYLYKDGADFMFMDMDTFEQVILPPSLVGDAAKFMKENTEVEVAMYGEKALTITLPNQVILKIVETDPGVRGDTVSGGTKPAKLETGAVVQVPLFVEQDTNVKVDTRTGQYLSRA</sequence>